<feature type="chain" id="PRO_1000070122" description="Membrane protein insertase YidC">
    <location>
        <begin position="1"/>
        <end position="545"/>
    </location>
</feature>
<feature type="transmembrane region" description="Helical" evidence="1">
    <location>
        <begin position="6"/>
        <end position="26"/>
    </location>
</feature>
<feature type="transmembrane region" description="Helical" evidence="1">
    <location>
        <begin position="354"/>
        <end position="374"/>
    </location>
</feature>
<feature type="transmembrane region" description="Helical" evidence="1">
    <location>
        <begin position="425"/>
        <end position="445"/>
    </location>
</feature>
<feature type="transmembrane region" description="Helical" evidence="1">
    <location>
        <begin position="462"/>
        <end position="482"/>
    </location>
</feature>
<feature type="transmembrane region" description="Helical" evidence="1">
    <location>
        <begin position="500"/>
        <end position="520"/>
    </location>
</feature>
<feature type="region of interest" description="Disordered" evidence="2">
    <location>
        <begin position="32"/>
        <end position="69"/>
    </location>
</feature>
<dbReference type="EMBL" id="AE017282">
    <property type="protein sequence ID" value="AAU90904.1"/>
    <property type="molecule type" value="Genomic_DNA"/>
</dbReference>
<dbReference type="RefSeq" id="WP_010962225.1">
    <property type="nucleotide sequence ID" value="NC_002977.6"/>
</dbReference>
<dbReference type="SMR" id="Q602M6"/>
<dbReference type="STRING" id="243233.MCA3037"/>
<dbReference type="GeneID" id="88225199"/>
<dbReference type="KEGG" id="mca:MCA3037"/>
<dbReference type="eggNOG" id="COG0706">
    <property type="taxonomic scope" value="Bacteria"/>
</dbReference>
<dbReference type="HOGENOM" id="CLU_016535_3_0_6"/>
<dbReference type="Proteomes" id="UP000006821">
    <property type="component" value="Chromosome"/>
</dbReference>
<dbReference type="GO" id="GO:0005886">
    <property type="term" value="C:plasma membrane"/>
    <property type="evidence" value="ECO:0007669"/>
    <property type="project" value="UniProtKB-SubCell"/>
</dbReference>
<dbReference type="GO" id="GO:0032977">
    <property type="term" value="F:membrane insertase activity"/>
    <property type="evidence" value="ECO:0007669"/>
    <property type="project" value="InterPro"/>
</dbReference>
<dbReference type="GO" id="GO:0051205">
    <property type="term" value="P:protein insertion into membrane"/>
    <property type="evidence" value="ECO:0007669"/>
    <property type="project" value="TreeGrafter"/>
</dbReference>
<dbReference type="GO" id="GO:0015031">
    <property type="term" value="P:protein transport"/>
    <property type="evidence" value="ECO:0007669"/>
    <property type="project" value="UniProtKB-KW"/>
</dbReference>
<dbReference type="CDD" id="cd20070">
    <property type="entry name" value="5TM_YidC_Alb3"/>
    <property type="match status" value="1"/>
</dbReference>
<dbReference type="CDD" id="cd19961">
    <property type="entry name" value="EcYidC-like_peri"/>
    <property type="match status" value="1"/>
</dbReference>
<dbReference type="Gene3D" id="2.70.98.90">
    <property type="match status" value="1"/>
</dbReference>
<dbReference type="HAMAP" id="MF_01810">
    <property type="entry name" value="YidC_type1"/>
    <property type="match status" value="1"/>
</dbReference>
<dbReference type="InterPro" id="IPR019998">
    <property type="entry name" value="Membr_insert_YidC"/>
</dbReference>
<dbReference type="InterPro" id="IPR028053">
    <property type="entry name" value="Membr_insert_YidC_N"/>
</dbReference>
<dbReference type="InterPro" id="IPR001708">
    <property type="entry name" value="YidC/ALB3/OXA1/COX18"/>
</dbReference>
<dbReference type="InterPro" id="IPR028055">
    <property type="entry name" value="YidC/Oxa/ALB_C"/>
</dbReference>
<dbReference type="InterPro" id="IPR047196">
    <property type="entry name" value="YidC_ALB_C"/>
</dbReference>
<dbReference type="InterPro" id="IPR038221">
    <property type="entry name" value="YidC_periplasmic_sf"/>
</dbReference>
<dbReference type="NCBIfam" id="NF002352">
    <property type="entry name" value="PRK01318.1-3"/>
    <property type="match status" value="1"/>
</dbReference>
<dbReference type="NCBIfam" id="TIGR03593">
    <property type="entry name" value="yidC_nterm"/>
    <property type="match status" value="1"/>
</dbReference>
<dbReference type="NCBIfam" id="TIGR03592">
    <property type="entry name" value="yidC_oxa1_cterm"/>
    <property type="match status" value="1"/>
</dbReference>
<dbReference type="PANTHER" id="PTHR12428:SF65">
    <property type="entry name" value="CYTOCHROME C OXIDASE ASSEMBLY PROTEIN COX18, MITOCHONDRIAL"/>
    <property type="match status" value="1"/>
</dbReference>
<dbReference type="PANTHER" id="PTHR12428">
    <property type="entry name" value="OXA1"/>
    <property type="match status" value="1"/>
</dbReference>
<dbReference type="Pfam" id="PF02096">
    <property type="entry name" value="60KD_IMP"/>
    <property type="match status" value="1"/>
</dbReference>
<dbReference type="Pfam" id="PF14849">
    <property type="entry name" value="YidC_periplas"/>
    <property type="match status" value="1"/>
</dbReference>
<dbReference type="PRINTS" id="PR00701">
    <property type="entry name" value="60KDINNERMP"/>
</dbReference>
<dbReference type="PRINTS" id="PR01900">
    <property type="entry name" value="YIDCPROTEIN"/>
</dbReference>
<organism>
    <name type="scientific">Methylococcus capsulatus (strain ATCC 33009 / NCIMB 11132 / Bath)</name>
    <dbReference type="NCBI Taxonomy" id="243233"/>
    <lineage>
        <taxon>Bacteria</taxon>
        <taxon>Pseudomonadati</taxon>
        <taxon>Pseudomonadota</taxon>
        <taxon>Gammaproteobacteria</taxon>
        <taxon>Methylococcales</taxon>
        <taxon>Methylococcaceae</taxon>
        <taxon>Methylococcus</taxon>
    </lineage>
</organism>
<comment type="function">
    <text evidence="1">Required for the insertion and/or proper folding and/or complex formation of integral membrane proteins into the membrane. Involved in integration of membrane proteins that insert both dependently and independently of the Sec translocase complex, as well as at least some lipoproteins. Aids folding of multispanning membrane proteins.</text>
</comment>
<comment type="subunit">
    <text evidence="1">Interacts with the Sec translocase complex via SecD. Specifically interacts with transmembrane segments of nascent integral membrane proteins during membrane integration.</text>
</comment>
<comment type="subcellular location">
    <subcellularLocation>
        <location evidence="1">Cell inner membrane</location>
        <topology evidence="1">Multi-pass membrane protein</topology>
    </subcellularLocation>
</comment>
<comment type="similarity">
    <text evidence="1">Belongs to the OXA1/ALB3/YidC family. Type 1 subfamily.</text>
</comment>
<proteinExistence type="inferred from homology"/>
<gene>
    <name evidence="1" type="primary">yidC</name>
    <name type="ordered locus">MCA3037</name>
</gene>
<name>YIDC_METCA</name>
<evidence type="ECO:0000255" key="1">
    <source>
        <dbReference type="HAMAP-Rule" id="MF_01810"/>
    </source>
</evidence>
<evidence type="ECO:0000256" key="2">
    <source>
        <dbReference type="SAM" id="MobiDB-lite"/>
    </source>
</evidence>
<accession>Q602M6</accession>
<keyword id="KW-0997">Cell inner membrane</keyword>
<keyword id="KW-1003">Cell membrane</keyword>
<keyword id="KW-0143">Chaperone</keyword>
<keyword id="KW-0472">Membrane</keyword>
<keyword id="KW-0653">Protein transport</keyword>
<keyword id="KW-1185">Reference proteome</keyword>
<keyword id="KW-0812">Transmembrane</keyword>
<keyword id="KW-1133">Transmembrane helix</keyword>
<keyword id="KW-0813">Transport</keyword>
<reference key="1">
    <citation type="journal article" date="2004" name="PLoS Biol.">
        <title>Genomic insights into methanotrophy: the complete genome sequence of Methylococcus capsulatus (Bath).</title>
        <authorList>
            <person name="Ward N.L."/>
            <person name="Larsen O."/>
            <person name="Sakwa J."/>
            <person name="Bruseth L."/>
            <person name="Khouri H.M."/>
            <person name="Durkin A.S."/>
            <person name="Dimitrov G."/>
            <person name="Jiang L."/>
            <person name="Scanlan D."/>
            <person name="Kang K.H."/>
            <person name="Lewis M.R."/>
            <person name="Nelson K.E."/>
            <person name="Methe B.A."/>
            <person name="Wu M."/>
            <person name="Heidelberg J.F."/>
            <person name="Paulsen I.T."/>
            <person name="Fouts D.E."/>
            <person name="Ravel J."/>
            <person name="Tettelin H."/>
            <person name="Ren Q."/>
            <person name="Read T.D."/>
            <person name="DeBoy R.T."/>
            <person name="Seshadri R."/>
            <person name="Salzberg S.L."/>
            <person name="Jensen H.B."/>
            <person name="Birkeland N.K."/>
            <person name="Nelson W.C."/>
            <person name="Dodson R.J."/>
            <person name="Grindhaug S.H."/>
            <person name="Holt I.E."/>
            <person name="Eidhammer I."/>
            <person name="Jonasen I."/>
            <person name="Vanaken S."/>
            <person name="Utterback T.R."/>
            <person name="Feldblyum T.V."/>
            <person name="Fraser C.M."/>
            <person name="Lillehaug J.R."/>
            <person name="Eisen J.A."/>
        </authorList>
    </citation>
    <scope>NUCLEOTIDE SEQUENCE [LARGE SCALE GENOMIC DNA]</scope>
    <source>
        <strain>ATCC 33009 / NCIMB 11132 / Bath</strain>
    </source>
</reference>
<sequence>MDNLRFVLFVFFIFLSFLLWEQWQIDYGPKPQAVAQTDGASRPAGDLPQRPSDDESDVTVHTEAPTQEGSRRIRVHTDVLSLEIDTRGGDLRQLDLLNYPVSKEQPDRPVRLLTDQGDIFVAQSGFIGAAQQVPNHHSLWQAEAGEYRLQDGQDILRVPLTWSDGQGVTVTKTYILRRGSYLIDMEQTIDNRSNTNWTGRQYMQLQRKEPTSAQEDSQFIRTYTGGVLHTEDKSYEKIAFKDMASGNLDAKSRQGWIAMIQHYFLAAWVPPAEDESTFYTKALADRVFVIGAYSPPAEVPAGSSQTLKARLFAGPKLQHVLEGIAPGLELTADFGILTVIAKPIYWLLETFHGFFNNWGWAIIFVTLVIKALFFKLSEASYRSMANMRKLQPKLVELKERYGEDRQRYNQAMMELYRKEKVNPLGGCLPILVQIPVFISLYWVLVESVDLRQAPFLLWLDDLSSKDPYFVLPLIMGVSMFIQQRLNPPPTDPIQARVMQFFPLVFTVFFLFFPSGLVLYWVVNNILSIIQQWYITRQIEKNTARA</sequence>
<protein>
    <recommendedName>
        <fullName evidence="1">Membrane protein insertase YidC</fullName>
    </recommendedName>
    <alternativeName>
        <fullName evidence="1">Foldase YidC</fullName>
    </alternativeName>
    <alternativeName>
        <fullName evidence="1">Membrane integrase YidC</fullName>
    </alternativeName>
    <alternativeName>
        <fullName evidence="1">Membrane protein YidC</fullName>
    </alternativeName>
</protein>